<feature type="signal peptide" evidence="1">
    <location>
        <begin position="1"/>
        <end position="19"/>
    </location>
</feature>
<feature type="chain" id="PRO_0000014126" description="Uncharacterized protein Rv2219">
    <location>
        <begin position="20"/>
        <end position="250"/>
    </location>
</feature>
<feature type="transmembrane region" description="Helical" evidence="1">
    <location>
        <begin position="51"/>
        <end position="71"/>
    </location>
</feature>
<feature type="transmembrane region" description="Helical" evidence="1">
    <location>
        <begin position="73"/>
        <end position="93"/>
    </location>
</feature>
<feature type="region of interest" description="Disordered" evidence="2">
    <location>
        <begin position="226"/>
        <end position="250"/>
    </location>
</feature>
<evidence type="ECO:0000255" key="1"/>
<evidence type="ECO:0000256" key="2">
    <source>
        <dbReference type="SAM" id="MobiDB-lite"/>
    </source>
</evidence>
<evidence type="ECO:0000305" key="3"/>
<comment type="subcellular location">
    <subcellularLocation>
        <location evidence="3">Cell membrane</location>
        <topology evidence="3">Multi-pass membrane protein</topology>
    </subcellularLocation>
</comment>
<organism>
    <name type="scientific">Mycobacterium tuberculosis (strain ATCC 25618 / H37Rv)</name>
    <dbReference type="NCBI Taxonomy" id="83332"/>
    <lineage>
        <taxon>Bacteria</taxon>
        <taxon>Bacillati</taxon>
        <taxon>Actinomycetota</taxon>
        <taxon>Actinomycetes</taxon>
        <taxon>Mycobacteriales</taxon>
        <taxon>Mycobacteriaceae</taxon>
        <taxon>Mycobacterium</taxon>
        <taxon>Mycobacterium tuberculosis complex</taxon>
    </lineage>
</organism>
<dbReference type="EMBL" id="AL123456">
    <property type="protein sequence ID" value="CCP44996.1"/>
    <property type="molecule type" value="Genomic_DNA"/>
</dbReference>
<dbReference type="PIR" id="D70787">
    <property type="entry name" value="D70787"/>
</dbReference>
<dbReference type="RefSeq" id="NP_216735.1">
    <property type="nucleotide sequence ID" value="NC_000962.3"/>
</dbReference>
<dbReference type="RefSeq" id="WP_003411463.1">
    <property type="nucleotide sequence ID" value="NZ_NVQJ01000008.1"/>
</dbReference>
<dbReference type="STRING" id="83332.Rv2219"/>
<dbReference type="PaxDb" id="83332-Rv2219"/>
<dbReference type="DNASU" id="888380"/>
<dbReference type="GeneID" id="888380"/>
<dbReference type="KEGG" id="mtu:Rv2219"/>
<dbReference type="KEGG" id="mtv:RVBD_2219"/>
<dbReference type="PATRIC" id="fig|83332.111.peg.2466"/>
<dbReference type="TubercuList" id="Rv2219"/>
<dbReference type="eggNOG" id="ENOG5031K3Y">
    <property type="taxonomic scope" value="Bacteria"/>
</dbReference>
<dbReference type="InParanoid" id="P9WLI1"/>
<dbReference type="OrthoDB" id="8479889at2"/>
<dbReference type="PhylomeDB" id="P9WLI1"/>
<dbReference type="Proteomes" id="UP000001584">
    <property type="component" value="Chromosome"/>
</dbReference>
<dbReference type="GO" id="GO:0005886">
    <property type="term" value="C:plasma membrane"/>
    <property type="evidence" value="ECO:0007005"/>
    <property type="project" value="MTBBASE"/>
</dbReference>
<dbReference type="InterPro" id="IPR025445">
    <property type="entry name" value="DUF4191"/>
</dbReference>
<dbReference type="Pfam" id="PF13829">
    <property type="entry name" value="DUF4191"/>
    <property type="match status" value="1"/>
</dbReference>
<gene>
    <name type="ordered locus">Rv2219</name>
    <name type="ORF">MTCY190.30</name>
</gene>
<sequence>MAKPRNAAESKAAKAQANAARKAAARQRRAQLWQAFTLQRKEDKRLLPYMIGAFLLIVGASVGVGVWAGGFTMFTMIPLGVLLGALVAFVIFGRRAQRTVYRKAEGQTGAAAWALDNLRGKWRVTPGVAATGNLDAVHRVIGRPGVIFVGEGSAARVKPLLAQEKKRTARLVGDVPIYDIIVGNGDGEVPLAKLERHLTRLPANITVKQMDTVESRLAALGSRAGAGVMPKGPLPTTAKMRSVQRTVRRK</sequence>
<name>Y2219_MYCTU</name>
<reference key="1">
    <citation type="journal article" date="1998" name="Nature">
        <title>Deciphering the biology of Mycobacterium tuberculosis from the complete genome sequence.</title>
        <authorList>
            <person name="Cole S.T."/>
            <person name="Brosch R."/>
            <person name="Parkhill J."/>
            <person name="Garnier T."/>
            <person name="Churcher C.M."/>
            <person name="Harris D.E."/>
            <person name="Gordon S.V."/>
            <person name="Eiglmeier K."/>
            <person name="Gas S."/>
            <person name="Barry C.E. III"/>
            <person name="Tekaia F."/>
            <person name="Badcock K."/>
            <person name="Basham D."/>
            <person name="Brown D."/>
            <person name="Chillingworth T."/>
            <person name="Connor R."/>
            <person name="Davies R.M."/>
            <person name="Devlin K."/>
            <person name="Feltwell T."/>
            <person name="Gentles S."/>
            <person name="Hamlin N."/>
            <person name="Holroyd S."/>
            <person name="Hornsby T."/>
            <person name="Jagels K."/>
            <person name="Krogh A."/>
            <person name="McLean J."/>
            <person name="Moule S."/>
            <person name="Murphy L.D."/>
            <person name="Oliver S."/>
            <person name="Osborne J."/>
            <person name="Quail M.A."/>
            <person name="Rajandream M.A."/>
            <person name="Rogers J."/>
            <person name="Rutter S."/>
            <person name="Seeger K."/>
            <person name="Skelton S."/>
            <person name="Squares S."/>
            <person name="Squares R."/>
            <person name="Sulston J.E."/>
            <person name="Taylor K."/>
            <person name="Whitehead S."/>
            <person name="Barrell B.G."/>
        </authorList>
    </citation>
    <scope>NUCLEOTIDE SEQUENCE [LARGE SCALE GENOMIC DNA]</scope>
    <source>
        <strain>ATCC 25618 / H37Rv</strain>
    </source>
</reference>
<reference key="2">
    <citation type="journal article" date="2011" name="Mol. Cell. Proteomics">
        <title>Proteogenomic analysis of Mycobacterium tuberculosis by high resolution mass spectrometry.</title>
        <authorList>
            <person name="Kelkar D.S."/>
            <person name="Kumar D."/>
            <person name="Kumar P."/>
            <person name="Balakrishnan L."/>
            <person name="Muthusamy B."/>
            <person name="Yadav A.K."/>
            <person name="Shrivastava P."/>
            <person name="Marimuthu A."/>
            <person name="Anand S."/>
            <person name="Sundaram H."/>
            <person name="Kingsbury R."/>
            <person name="Harsha H.C."/>
            <person name="Nair B."/>
            <person name="Prasad T.S."/>
            <person name="Chauhan D.S."/>
            <person name="Katoch K."/>
            <person name="Katoch V.M."/>
            <person name="Kumar P."/>
            <person name="Chaerkady R."/>
            <person name="Ramachandran S."/>
            <person name="Dash D."/>
            <person name="Pandey A."/>
        </authorList>
    </citation>
    <scope>IDENTIFICATION BY MASS SPECTROMETRY [LARGE SCALE ANALYSIS]</scope>
    <source>
        <strain>ATCC 25618 / H37Rv</strain>
    </source>
</reference>
<protein>
    <recommendedName>
        <fullName>Uncharacterized protein Rv2219</fullName>
    </recommendedName>
</protein>
<keyword id="KW-1003">Cell membrane</keyword>
<keyword id="KW-0472">Membrane</keyword>
<keyword id="KW-1185">Reference proteome</keyword>
<keyword id="KW-0732">Signal</keyword>
<keyword id="KW-0812">Transmembrane</keyword>
<keyword id="KW-1133">Transmembrane helix</keyword>
<accession>P9WLI1</accession>
<accession>L0TBU9</accession>
<accession>Q10405</accession>
<proteinExistence type="evidence at protein level"/>